<dbReference type="EMBL" id="AE009950">
    <property type="protein sequence ID" value="AAL80599.1"/>
    <property type="molecule type" value="Genomic_DNA"/>
</dbReference>
<dbReference type="RefSeq" id="WP_011011592.1">
    <property type="nucleotide sequence ID" value="NZ_CP023154.1"/>
</dbReference>
<dbReference type="SMR" id="Q8U3J1"/>
<dbReference type="STRING" id="186497.PF0475"/>
<dbReference type="PaxDb" id="186497-PF0475"/>
<dbReference type="KEGG" id="pfu:PF0475"/>
<dbReference type="PATRIC" id="fig|186497.12.peg.499"/>
<dbReference type="eggNOG" id="arCOG01125">
    <property type="taxonomic scope" value="Archaea"/>
</dbReference>
<dbReference type="HOGENOM" id="CLU_016218_2_1_2"/>
<dbReference type="OrthoDB" id="45195at2157"/>
<dbReference type="PhylomeDB" id="Q8U3J1"/>
<dbReference type="Proteomes" id="UP000001013">
    <property type="component" value="Chromosome"/>
</dbReference>
<dbReference type="GO" id="GO:0005085">
    <property type="term" value="F:guanyl-nucleotide exchange factor activity"/>
    <property type="evidence" value="ECO:0007669"/>
    <property type="project" value="TreeGrafter"/>
</dbReference>
<dbReference type="GO" id="GO:0003743">
    <property type="term" value="F:translation initiation factor activity"/>
    <property type="evidence" value="ECO:0007669"/>
    <property type="project" value="UniProtKB-KW"/>
</dbReference>
<dbReference type="Gene3D" id="1.20.120.420">
    <property type="entry name" value="translation initiation factor eif-2b, domain 1"/>
    <property type="match status" value="1"/>
</dbReference>
<dbReference type="Gene3D" id="3.40.50.10470">
    <property type="entry name" value="Translation initiation factor eif-2b, domain 2"/>
    <property type="match status" value="1"/>
</dbReference>
<dbReference type="InterPro" id="IPR051501">
    <property type="entry name" value="eIF2B_alpha/beta/delta"/>
</dbReference>
<dbReference type="InterPro" id="IPR000649">
    <property type="entry name" value="IF-2B-related"/>
</dbReference>
<dbReference type="InterPro" id="IPR042529">
    <property type="entry name" value="IF_2B-like_C"/>
</dbReference>
<dbReference type="InterPro" id="IPR027363">
    <property type="entry name" value="M1Pi_N"/>
</dbReference>
<dbReference type="InterPro" id="IPR037171">
    <property type="entry name" value="NagB/RpiA_transferase-like"/>
</dbReference>
<dbReference type="NCBIfam" id="NF006210">
    <property type="entry name" value="PRK08335.1"/>
    <property type="match status" value="1"/>
</dbReference>
<dbReference type="PANTHER" id="PTHR45860">
    <property type="entry name" value="TRANSLATION INITIATION FACTOR EIF-2B SUBUNIT ALPHA"/>
    <property type="match status" value="1"/>
</dbReference>
<dbReference type="PANTHER" id="PTHR45860:SF1">
    <property type="entry name" value="TRANSLATION INITIATION FACTOR EIF-2B SUBUNIT ALPHA"/>
    <property type="match status" value="1"/>
</dbReference>
<dbReference type="Pfam" id="PF01008">
    <property type="entry name" value="IF-2B"/>
    <property type="match status" value="1"/>
</dbReference>
<dbReference type="SUPFAM" id="SSF100950">
    <property type="entry name" value="NagB/RpiA/CoA transferase-like"/>
    <property type="match status" value="1"/>
</dbReference>
<proteinExistence type="inferred from homology"/>
<name>EI2BL_PYRFU</name>
<feature type="chain" id="PRO_0000156108" description="Putative translation initiation factor eIF-2B subunit 2-like">
    <location>
        <begin position="1"/>
        <end position="276"/>
    </location>
</feature>
<reference key="1">
    <citation type="journal article" date="1999" name="Genetics">
        <title>Divergence of the hyperthermophilic archaea Pyrococcus furiosus and P. horikoshii inferred from complete genomic sequences.</title>
        <authorList>
            <person name="Maeder D.L."/>
            <person name="Weiss R.B."/>
            <person name="Dunn D.M."/>
            <person name="Cherry J.L."/>
            <person name="Gonzalez J.M."/>
            <person name="DiRuggiero J."/>
            <person name="Robb F.T."/>
        </authorList>
    </citation>
    <scope>NUCLEOTIDE SEQUENCE [LARGE SCALE GENOMIC DNA]</scope>
    <source>
        <strain>ATCC 43587 / DSM 3638 / JCM 8422 / Vc1</strain>
    </source>
</reference>
<accession>Q8U3J1</accession>
<comment type="function">
    <text evidence="1">Catalyzes the exchange of initiation factor 2-bound GDP for GTP.</text>
</comment>
<comment type="subunit">
    <text evidence="2">Complex of two different subunits.</text>
</comment>
<comment type="similarity">
    <text evidence="2">Belongs to the eIF-2B alpha/beta/delta subunits family.</text>
</comment>
<organism>
    <name type="scientific">Pyrococcus furiosus (strain ATCC 43587 / DSM 3638 / JCM 8422 / Vc1)</name>
    <dbReference type="NCBI Taxonomy" id="186497"/>
    <lineage>
        <taxon>Archaea</taxon>
        <taxon>Methanobacteriati</taxon>
        <taxon>Methanobacteriota</taxon>
        <taxon>Thermococci</taxon>
        <taxon>Thermococcales</taxon>
        <taxon>Thermococcaceae</taxon>
        <taxon>Pyrococcus</taxon>
    </lineage>
</organism>
<sequence length="276" mass="31097">MLPEKVVKILEEMKNEKIRGASWMAKKGAEAFILLSEELDETSLEEGIIELKREILEINPSMASLYNLAMFIPITNDREVVKLRAEEFIKRAEEAKKEIASIGAQLIDSGDVIITHSYSSAVFEILKTAKRRGKQFKVILTESAPDYEGLYLAKALQDESIEVEIITDAQLGLFAKDATLAIVGADTVTKDGYVVNKAGTYLLAISCYESEVPFYVAAETYKFHQKITSKEVELVERPLYREGSRVRNVLFDITPWKFIRGIITELGIILPPRDMI</sequence>
<keyword id="KW-0396">Initiation factor</keyword>
<keyword id="KW-0648">Protein biosynthesis</keyword>
<keyword id="KW-1185">Reference proteome</keyword>
<evidence type="ECO:0000250" key="1"/>
<evidence type="ECO:0000305" key="2"/>
<gene>
    <name type="ordered locus">PF0475</name>
</gene>
<protein>
    <recommendedName>
        <fullName>Putative translation initiation factor eIF-2B subunit 2-like</fullName>
    </recommendedName>
    <alternativeName>
        <fullName>eIF-2B GDP-GTP exchange factor</fullName>
    </alternativeName>
</protein>